<name>PK1L1_MOUSE</name>
<keyword id="KW-0106">Calcium</keyword>
<keyword id="KW-0107">Calcium channel</keyword>
<keyword id="KW-0109">Calcium transport</keyword>
<keyword id="KW-1003">Cell membrane</keyword>
<keyword id="KW-0966">Cell projection</keyword>
<keyword id="KW-0969">Cilium</keyword>
<keyword id="KW-1015">Disulfide bond</keyword>
<keyword id="KW-0325">Glycoprotein</keyword>
<keyword id="KW-0407">Ion channel</keyword>
<keyword id="KW-0406">Ion transport</keyword>
<keyword id="KW-0472">Membrane</keyword>
<keyword id="KW-1185">Reference proteome</keyword>
<keyword id="KW-0677">Repeat</keyword>
<keyword id="KW-0812">Transmembrane</keyword>
<keyword id="KW-1133">Transmembrane helix</keyword>
<keyword id="KW-0813">Transport</keyword>
<organism>
    <name type="scientific">Mus musculus</name>
    <name type="common">Mouse</name>
    <dbReference type="NCBI Taxonomy" id="10090"/>
    <lineage>
        <taxon>Eukaryota</taxon>
        <taxon>Metazoa</taxon>
        <taxon>Chordata</taxon>
        <taxon>Craniata</taxon>
        <taxon>Vertebrata</taxon>
        <taxon>Euteleostomi</taxon>
        <taxon>Mammalia</taxon>
        <taxon>Eutheria</taxon>
        <taxon>Euarchontoglires</taxon>
        <taxon>Glires</taxon>
        <taxon>Rodentia</taxon>
        <taxon>Myomorpha</taxon>
        <taxon>Muroidea</taxon>
        <taxon>Muridae</taxon>
        <taxon>Murinae</taxon>
        <taxon>Mus</taxon>
        <taxon>Mus</taxon>
    </lineage>
</organism>
<accession>Q8R526</accession>
<accession>F6VYK1</accession>
<accession>J3QMZ2</accession>
<reference key="1">
    <citation type="journal article" date="2009" name="PLoS Biol.">
        <title>Lineage-specific biology revealed by a finished genome assembly of the mouse.</title>
        <authorList>
            <person name="Church D.M."/>
            <person name="Goodstadt L."/>
            <person name="Hillier L.W."/>
            <person name="Zody M.C."/>
            <person name="Goldstein S."/>
            <person name="She X."/>
            <person name="Bult C.J."/>
            <person name="Agarwala R."/>
            <person name="Cherry J.L."/>
            <person name="DiCuccio M."/>
            <person name="Hlavina W."/>
            <person name="Kapustin Y."/>
            <person name="Meric P."/>
            <person name="Maglott D."/>
            <person name="Birtle Z."/>
            <person name="Marques A.C."/>
            <person name="Graves T."/>
            <person name="Zhou S."/>
            <person name="Teague B."/>
            <person name="Potamousis K."/>
            <person name="Churas C."/>
            <person name="Place M."/>
            <person name="Herschleb J."/>
            <person name="Runnheim R."/>
            <person name="Forrest D."/>
            <person name="Amos-Landgraf J."/>
            <person name="Schwartz D.C."/>
            <person name="Cheng Z."/>
            <person name="Lindblad-Toh K."/>
            <person name="Eichler E.E."/>
            <person name="Ponting C.P."/>
        </authorList>
    </citation>
    <scope>NUCLEOTIDE SEQUENCE [LARGE SCALE GENOMIC DNA]</scope>
    <source>
        <strain>C57BL/6J</strain>
    </source>
</reference>
<reference key="2">
    <citation type="journal article" date="2002" name="Genomics">
        <title>The sequence, expression, and chromosomal localization of a novel polycystic kidney disease 1-like gene, PKD1L1, in human.</title>
        <authorList>
            <person name="Yuasa T."/>
            <person name="Venugopal B."/>
            <person name="Weremowicz S."/>
            <person name="Morton C.C."/>
            <person name="Guo L."/>
            <person name="Zhou J."/>
        </authorList>
    </citation>
    <scope>NUCLEOTIDE SEQUENCE [MRNA] OF 1504-2034</scope>
    <scope>TISSUE SPECIFICITY</scope>
    <source>
        <tissue>Testis</tissue>
    </source>
</reference>
<reference key="3">
    <citation type="journal article" date="2010" name="Vet. Pathol.">
        <title>Situs inversus in Dpcd/Poll-/-, Nme7-/-, and Pkd1l1-/- mice.</title>
        <authorList>
            <person name="Vogel P."/>
            <person name="Read R."/>
            <person name="Hansen G.M."/>
            <person name="Freay L.C."/>
            <person name="Zambrowicz B.P."/>
            <person name="Sands A.T."/>
        </authorList>
    </citation>
    <scope>DISRUPTION PHENOTYPE</scope>
</reference>
<reference key="4">
    <citation type="journal article" date="2011" name="Development">
        <title>Pkd1l1 establishes left-right asymmetry and physically interacts with Pkd2.</title>
        <authorList>
            <person name="Field S."/>
            <person name="Riley K.L."/>
            <person name="Grimes D.T."/>
            <person name="Hilton H."/>
            <person name="Simon M."/>
            <person name="Powles-Glover N."/>
            <person name="Siggers P."/>
            <person name="Bogani D."/>
            <person name="Greenfield A."/>
            <person name="Norris D.P."/>
        </authorList>
    </citation>
    <scope>FUNCTION</scope>
    <scope>SUBCELLULAR LOCATION</scope>
    <scope>INTERACTION WITH PKD2</scope>
    <scope>MUTAGENESIS OF ASP-411</scope>
    <scope>TISSUE SPECIFICITY</scope>
</reference>
<reference key="5">
    <citation type="journal article" date="2013" name="Nature">
        <title>Direct recording and molecular identification of the calcium channel of primary cilia.</title>
        <authorList>
            <person name="DeCaen P.G."/>
            <person name="Delling M."/>
            <person name="Vien T.N."/>
            <person name="Clapham D.E."/>
        </authorList>
    </citation>
    <scope>FUNCTION</scope>
</reference>
<reference key="6">
    <citation type="journal article" date="2024" name="Cells">
        <title>PKD1L1 is involved in congenital chylothorax.</title>
        <authorList>
            <person name="Whitchurch J.B."/>
            <person name="Schneider S."/>
            <person name="Hilger A.C."/>
            <person name="Koellges R."/>
            <person name="Stegmann J.D."/>
            <person name="Waffenschmidt L."/>
            <person name="Dyer L."/>
            <person name="Thiele H."/>
            <person name="Dhabhai B."/>
            <person name="Dakal T.C."/>
            <person name="Mueller A."/>
            <person name="Norris D.P."/>
            <person name="Reutter H.M."/>
        </authorList>
    </citation>
    <scope>DISRUPTION PHENOTYPE</scope>
</reference>
<comment type="function">
    <text evidence="1 10 11">Component of a calcium-permeant ion channel formed by PKD1L2 and PKD1L1 in primary cilia, where it controls cilium calcium concentration, without affecting cytoplasmic calcium concentration, and regulates sonic hedgehog/SHH signaling and GLI2 transcription (PubMed:24336289). The PKD1L1:PKD2L1 channel complex is mechanosensitive only at high pressures and is highly temperature sensitive (By similarity). Also involved in left/right axis specification downstream of nodal flow by forming a complex with PKD2 in cilia to facilitate flow detection in left/right patterning (PubMed:21307093). May function as a G-protein-coupled receptor (By similarity).</text>
</comment>
<comment type="subunit">
    <text evidence="1 10">Heterodimer (PubMed:21307093). Interacts with PKD2 to form a calcium channel (PubMed:21307093). Interacts with PKD2L1; to form ciliary calcium channel (By similarity). May interact with GNA12, GNAS, GNAI1 and GNAI2 (By similarity).</text>
</comment>
<comment type="subcellular location">
    <subcellularLocation>
        <location evidence="10">Cell projection</location>
        <location evidence="10">Cilium membrane</location>
        <topology evidence="2">Multi-pass membrane protein</topology>
    </subcellularLocation>
</comment>
<comment type="tissue specificity">
    <text evidence="8 10">In testis, strong expression in Leydig cells, low level in seminal ducts, myoid cells and tunica vaginalis (PubMed:11863367). Other tissues, including adrenal gland and heart myocardium, also show low expression (PubMed:11863367). In embryo, highly expressed in the node (PubMed:21307093).</text>
</comment>
<comment type="disruption phenotype">
    <text evidence="9 12">Situs inversus in approximately one third of the homozygous mutant mice (PubMed:20080492). Besides visceral heterotaxia, most null mouse embryos present with a range of lymphatic vessel abnormalities, edema and perinatal lethality (PubMed:38247840).</text>
</comment>
<comment type="similarity">
    <text evidence="14">Belongs to the polycystin family.</text>
</comment>
<gene>
    <name evidence="16" type="primary">Pkd1l1</name>
    <name evidence="13" type="synonym">Rks</name>
</gene>
<sequence>MDVDEDQHAVAVLHHKIQANPELCVSDEQDSCPSDAPKGTARDPESQKPSSPAPWDKNVLNTGSEERLSFINGEPQAPPNWDEGTNSFSNPPPGISHTCNLSASWYHPESSSPLTQHPPRATLVTQPENVEHFAICCFPETDAQALPALGIRVHVASGTALCLLLDFGDNCGAQMRLCTLAGATTVTGYHQYRKEGVYELKAVVHDFHRAEELGPYYVDISHGNVSVFMNSSSIHDSEALSFADSLPQQRGTVVVHCFSSISSYNVSFISQTQVASGQAWCGVTVGYKMQSVSVYTNGTVFAANTNITFVAITEETIPLEFAWYFGENPPVMTTSRSIRRRLSVPQWYRVKVKATSRIGSVVSEPHLIRVQKRIMANRLVSTASALVNANVSFECRLNFGTDVAYLWNFGDDTIELGSSSSSHVYSREGEFTVEVLAFNNVSSTTLRKQLFIVREPCQPPPVKNMGPAKVQIWRSQPLRLGVTFEAAILCNISQGLSYTWSFVSAEMTTVTLPTAVNTRRQTIMLPSYTLECGNYTAIAKVQIKGSMVYSNYCVGVEVRARAPVSVISEGTHIFISTATSTFIILRGAQSYDPDNPGAALRYHWTCTAASSPRWPCFDNSTSYQVDTQAPAISFPAKWLSECCDQFLVTLTVSSRGQNSSQALMFLSTRPDLAFRFVHISWVNFRDISVNWNEEVSLRAVCEDCGDVPDLTYSWDLFLVNATEKSAVEVPFCSTVGLLGALALGTSLKSSKSDLPSNLRAPLTPHSPEPSPTPLGWTALSNLGSISAESTAGGHHVPASGAVAGSGEPMEEYSSLSSLAEEALMTNSSEGSWPSPSSSTDFDDFEAYYSDIQEAVLSLGRQPGTSTNFQEAGPSLSAEESASYGDNLLGPFLHTGRAKPTLMIDWPKALVSQAAFHGYTTSGIMGPAVTIKPFSLSSGKTYVLQASVASKHVLLGKAQLYLTVNQAPQDMSCQVRPHHGMEAYTIFSVFCMSGKPDFHYEFRYRIGNTSSHTLYRGQDTQHYFLLPAGDSSDNYKVIVSTEITDGHGSKVQPCTVAVTVLPRYHGNDCCDKELYNSTLESLSTLRLAGSYMETRNYITMITGILSRLYVESRNTSSCGQWSQIQDVLISSACKVPYTDQEGMMDSIHILRDLISFPNKLSLTSAMCIFKYTKMFLAQGQFSRRLLVDKKLRVEFVLLISGVWEAAKEDARDGDYLQEEGMKIISDMLLACLSDEHQIHVSTGQMEFQTLLHRSPQSSIQNLGFVQVHFPSDLASLHSTTQEATQSSCYISQLMFFMKSPYLGGQVPGQVGGVMIPRLYSCESRRPILRGQLETPVTMEFGEEDYLHKRNPAMFVLLRDEVNVHRFTGLSENSQESLQIHIKFSKPVTRPFPIILLVRFSEKATPSDFLVKRVYFWDEQTVQMYVPAAPWKGANVGYLSLLDADYDRKPPNKYLAGAVNYTVHFQWIQCVFWDKTEWRSEGPYPQPGSSPEKVNCSYHHLAPVSVLRRKLNATLEVSSISEFQSHPHNLLPGIFSAFLLVLYGILVSKSRYVDCHEKKNPGFIFLEEDTLPGYQLYAVVIDTGFRSPVRFTSKVFIVLCGENGCSETKELCCPEKPLFGRNSRHTFILSIPNQLGPLQKIRLWHDSSGSSPCWFISHVMVKELCSGQAWFFSAQCWLAVSKLGGHVLREFFCLSHGLGFWKLFYSKFTEYLEDFHIWLSLYSQPPSRSYLHTQRLAVSFCLLCVYSCLTALVTVRDHQQRPLDVGPTAITLEPFCMALLCTLLACPVAQLLSLLFRCSKEARGDMQASTQWPLRGVKTETPQGHDSSGRPDSRQPSPHPTSDLLPWNDQAWRIAASSSAVVCSPFPMEACSHKHHDLREKSHYSPPSSQAPGSGFEELGSQKSRVCLLWSSSVAWAISGSASLACGLGTGFLGYWFVPAQCMWWLYLLLLSLVCCAFITQPLMICLAALVFAWKRKHDSKFFTESLQDATKGLDLELEEHSRTRVPLSPISYSPDTAEEAERVLATRQRERHLRWAQTPSKAKLRVTGERLRRESIMQAALRDMTTHSIMLLLLLFIAYGRFCPGEISLNHAIRKAFTRKANHSLGDLSSTEDWWDWTLSTLLDELYPERTSARAWGAQPGALGGQCHLIGPPVVKLLKISAGTACTPPRPFSELVEDVLPMHSNDLDLENQNVSPGGPETCGVKKESYMHSLGKTRHEAHAALTALRASKWIDHSTRAMSVHFTLYNPPTQLFTSVILGTECLPSGGLVPSFLVESFRIFYSDSALKYLLMLSELLFLVLNVIHLCFQLWGMTTKGILSYWRKPRHWLELSMVGVAIAYYAASGHLTTLAVNITDQFHKGLYQRLVDIGLMVSWHQRARCLQGILLFLWMLKYVHLLSSLSTMTPFSAVTCFPLFRVLLVGALLLAAHYHSRWFLLFTGTLSHGTSAEAFPGLLLQFPGRSKKDSWHNCLKSDHGVMRCYYGTLFLLLATLGFRMLRATFLTVFQNRKSSHRKPLVTLKDIAVYTWHKVLTLLGLETTLEETEVATDHIYYLDEFSSLLDELLMKIDGLSDSLELSILENQWKRALESRAGDSPPVGSSEYQATGVSGPLAAESE</sequence>
<evidence type="ECO:0000250" key="1">
    <source>
        <dbReference type="UniProtKB" id="Q8TDX9"/>
    </source>
</evidence>
<evidence type="ECO:0000255" key="2"/>
<evidence type="ECO:0000255" key="3">
    <source>
        <dbReference type="PROSITE-ProRule" id="PRU00098"/>
    </source>
</evidence>
<evidence type="ECO:0000255" key="4">
    <source>
        <dbReference type="PROSITE-ProRule" id="PRU00151"/>
    </source>
</evidence>
<evidence type="ECO:0000255" key="5">
    <source>
        <dbReference type="PROSITE-ProRule" id="PRU00152"/>
    </source>
</evidence>
<evidence type="ECO:0000255" key="6">
    <source>
        <dbReference type="PROSITE-ProRule" id="PRU00511"/>
    </source>
</evidence>
<evidence type="ECO:0000256" key="7">
    <source>
        <dbReference type="SAM" id="MobiDB-lite"/>
    </source>
</evidence>
<evidence type="ECO:0000269" key="8">
    <source>
    </source>
</evidence>
<evidence type="ECO:0000269" key="9">
    <source>
    </source>
</evidence>
<evidence type="ECO:0000269" key="10">
    <source>
    </source>
</evidence>
<evidence type="ECO:0000269" key="11">
    <source>
    </source>
</evidence>
<evidence type="ECO:0000269" key="12">
    <source>
    </source>
</evidence>
<evidence type="ECO:0000303" key="13">
    <source>
    </source>
</evidence>
<evidence type="ECO:0000305" key="14"/>
<evidence type="ECO:0000305" key="15">
    <source>
    </source>
</evidence>
<evidence type="ECO:0000312" key="16">
    <source>
        <dbReference type="MGI" id="MGI:2156538"/>
    </source>
</evidence>
<protein>
    <recommendedName>
        <fullName evidence="14">Polycystin-1-like protein 1</fullName>
        <shortName>Polycystin-1L1</shortName>
    </recommendedName>
    <alternativeName>
        <fullName>PC1-like 1 protein</fullName>
    </alternativeName>
    <alternativeName>
        <fullName>Polycystic kidney disease protein 1-like 1</fullName>
    </alternativeName>
    <alternativeName>
        <fullName evidence="15">Protein rikishi</fullName>
    </alternativeName>
</protein>
<proteinExistence type="evidence at protein level"/>
<feature type="chain" id="PRO_0000164359" description="Polycystin-1-like protein 1">
    <location>
        <begin position="1"/>
        <end position="2615"/>
    </location>
</feature>
<feature type="topological domain" description="Extracellular" evidence="2">
    <location>
        <begin position="1"/>
        <end position="1524"/>
    </location>
</feature>
<feature type="transmembrane region" description="Helical" evidence="2">
    <location>
        <begin position="1525"/>
        <end position="1545"/>
    </location>
</feature>
<feature type="topological domain" description="Cytoplasmic" evidence="2">
    <location>
        <begin position="1546"/>
        <end position="1732"/>
    </location>
</feature>
<feature type="transmembrane region" description="Helical" evidence="2">
    <location>
        <begin position="1733"/>
        <end position="1753"/>
    </location>
</feature>
<feature type="topological domain" description="Extracellular" evidence="2">
    <location>
        <begin position="1754"/>
        <end position="1772"/>
    </location>
</feature>
<feature type="transmembrane region" description="Helical" evidence="2">
    <location>
        <begin position="1773"/>
        <end position="1793"/>
    </location>
</feature>
<feature type="topological domain" description="Cytoplasmic" evidence="2">
    <location>
        <begin position="1794"/>
        <end position="1905"/>
    </location>
</feature>
<feature type="transmembrane region" description="Helical" evidence="2">
    <location>
        <begin position="1906"/>
        <end position="1926"/>
    </location>
</feature>
<feature type="topological domain" description="Extracellular" evidence="2">
    <location>
        <begin position="1927"/>
        <end position="1950"/>
    </location>
</feature>
<feature type="transmembrane region" description="Helical" evidence="2">
    <location>
        <begin position="1951"/>
        <end position="1971"/>
    </location>
</feature>
<feature type="topological domain" description="Cytoplasmic" evidence="2">
    <location>
        <begin position="1972"/>
        <end position="2057"/>
    </location>
</feature>
<feature type="transmembrane region" description="Helical" evidence="2">
    <location>
        <begin position="2058"/>
        <end position="2078"/>
    </location>
</feature>
<feature type="topological domain" description="Extracellular" evidence="2">
    <location>
        <begin position="2079"/>
        <end position="2288"/>
    </location>
</feature>
<feature type="transmembrane region" description="Helical" evidence="2">
    <location>
        <begin position="2289"/>
        <end position="2309"/>
    </location>
</feature>
<feature type="topological domain" description="Cytoplasmic" evidence="2">
    <location>
        <begin position="2310"/>
        <end position="2332"/>
    </location>
</feature>
<feature type="transmembrane region" description="Helical" evidence="2">
    <location>
        <begin position="2333"/>
        <end position="2353"/>
    </location>
</feature>
<feature type="topological domain" description="Extracellular" evidence="2">
    <location>
        <begin position="2354"/>
        <end position="2379"/>
    </location>
</feature>
<feature type="transmembrane region" description="Helical" evidence="2">
    <location>
        <begin position="2380"/>
        <end position="2400"/>
    </location>
</feature>
<feature type="topological domain" description="Cytoplasmic" evidence="2">
    <location>
        <begin position="2401"/>
        <end position="2405"/>
    </location>
</feature>
<feature type="transmembrane region" description="Helical" evidence="2">
    <location>
        <begin position="2406"/>
        <end position="2426"/>
    </location>
</feature>
<feature type="topological domain" description="Extracellular" evidence="2">
    <location>
        <begin position="2427"/>
        <end position="2483"/>
    </location>
</feature>
<feature type="transmembrane region" description="Helical" evidence="2">
    <location>
        <begin position="2484"/>
        <end position="2504"/>
    </location>
</feature>
<feature type="topological domain" description="Cytoplasmic" evidence="2">
    <location>
        <begin position="2505"/>
        <end position="2615"/>
    </location>
</feature>
<feature type="domain" description="PKD 1" evidence="4">
    <location>
        <begin position="291"/>
        <end position="373"/>
    </location>
</feature>
<feature type="domain" description="PKD 2" evidence="4">
    <location>
        <begin position="375"/>
        <end position="456"/>
    </location>
</feature>
<feature type="domain" description="REJ" evidence="6">
    <location>
        <begin position="457"/>
        <end position="1349"/>
    </location>
</feature>
<feature type="domain" description="GAIN-B" evidence="3">
    <location>
        <begin position="1364"/>
        <end position="1512"/>
    </location>
</feature>
<feature type="domain" description="PLAT" evidence="5">
    <location>
        <begin position="1573"/>
        <end position="1690"/>
    </location>
</feature>
<feature type="region of interest" description="Disordered" evidence="7">
    <location>
        <begin position="17"/>
        <end position="93"/>
    </location>
</feature>
<feature type="region of interest" description="Disordered" evidence="7">
    <location>
        <begin position="749"/>
        <end position="815"/>
    </location>
</feature>
<feature type="region of interest" description="GPS" evidence="3">
    <location>
        <begin position="1468"/>
        <end position="1512"/>
    </location>
</feature>
<feature type="region of interest" description="Disordered" evidence="7">
    <location>
        <begin position="1807"/>
        <end position="1840"/>
    </location>
</feature>
<feature type="region of interest" description="Disordered" evidence="7">
    <location>
        <begin position="2589"/>
        <end position="2615"/>
    </location>
</feature>
<feature type="compositionally biased region" description="Polar residues" evidence="7">
    <location>
        <begin position="778"/>
        <end position="789"/>
    </location>
</feature>
<feature type="glycosylation site" description="N-linked (GlcNAc...) asparagine" evidence="2">
    <location>
        <position position="224"/>
    </location>
</feature>
<feature type="glycosylation site" description="N-linked (GlcNAc...) asparagine" evidence="2">
    <location>
        <position position="297"/>
    </location>
</feature>
<feature type="glycosylation site" description="N-linked (GlcNAc...) asparagine" evidence="2">
    <location>
        <position position="306"/>
    </location>
</feature>
<feature type="glycosylation site" description="N-linked (GlcNAc...) asparagine" evidence="2">
    <location>
        <position position="390"/>
    </location>
</feature>
<feature type="glycosylation site" description="N-linked (GlcNAc...) asparagine" evidence="2">
    <location>
        <position position="440"/>
    </location>
</feature>
<feature type="glycosylation site" description="N-linked (GlcNAc...) asparagine" evidence="2">
    <location>
        <position position="534"/>
    </location>
</feature>
<feature type="glycosylation site" description="N-linked (GlcNAc...) asparagine" evidence="2">
    <location>
        <position position="619"/>
    </location>
</feature>
<feature type="glycosylation site" description="N-linked (GlcNAc...) asparagine" evidence="2">
    <location>
        <position position="1458"/>
    </location>
</feature>
<feature type="glycosylation site" description="N-linked (GlcNAc...) asparagine" evidence="2">
    <location>
        <position position="1510"/>
    </location>
</feature>
<feature type="disulfide bond" evidence="3">
    <location>
        <begin position="1468"/>
        <end position="1494"/>
    </location>
</feature>
<feature type="mutagenesis site" description="In rks; mice exhibit gross left-right abnormalities. Embryos do not show defects in kidney development. The nodes appear normal." evidence="10">
    <original>D</original>
    <variation>G</variation>
    <location>
        <position position="411"/>
    </location>
</feature>
<feature type="sequence conflict" description="In Ref. 2; BAB85808." evidence="14" ref="2">
    <original>KL</original>
    <variation>RQ</variation>
    <location>
        <begin position="1680"/>
        <end position="1681"/>
    </location>
</feature>
<feature type="sequence conflict" description="In Ref. 2; BAB85808." evidence="14" ref="2">
    <original>WK</original>
    <variation>LQ</variation>
    <location>
        <begin position="1699"/>
        <end position="1700"/>
    </location>
</feature>
<feature type="sequence conflict" description="In Ref. 2; BAB85808." evidence="14" ref="2">
    <original>L</original>
    <variation>F</variation>
    <location>
        <position position="1789"/>
    </location>
</feature>
<feature type="sequence conflict" description="In Ref. 2; BAB85808." evidence="14" ref="2">
    <original>Q</original>
    <variation>H</variation>
    <location>
        <position position="1833"/>
    </location>
</feature>
<feature type="sequence conflict" description="In Ref. 2; BAB85808." evidence="14" ref="2">
    <original>N</original>
    <variation>T</variation>
    <location>
        <position position="1846"/>
    </location>
</feature>
<dbReference type="EMBL" id="AL645571">
    <property type="status" value="NOT_ANNOTATED_CDS"/>
    <property type="molecule type" value="Genomic_DNA"/>
</dbReference>
<dbReference type="EMBL" id="AB061684">
    <property type="protein sequence ID" value="BAB85808.1"/>
    <property type="molecule type" value="mRNA"/>
</dbReference>
<dbReference type="FunCoup" id="Q8R526">
    <property type="interactions" value="35"/>
</dbReference>
<dbReference type="STRING" id="10090.ENSMUSP00000120803"/>
<dbReference type="GlyCosmos" id="Q8R526">
    <property type="glycosylation" value="9 sites, No reported glycans"/>
</dbReference>
<dbReference type="GlyGen" id="Q8R526">
    <property type="glycosylation" value="11 sites"/>
</dbReference>
<dbReference type="iPTMnet" id="Q8R526"/>
<dbReference type="PhosphoSitePlus" id="Q8R526"/>
<dbReference type="PaxDb" id="10090-ENSMUSP00000120803"/>
<dbReference type="AGR" id="MGI:2156538"/>
<dbReference type="MGI" id="MGI:2156538">
    <property type="gene designation" value="Pkd1l1"/>
</dbReference>
<dbReference type="eggNOG" id="KOG3599">
    <property type="taxonomic scope" value="Eukaryota"/>
</dbReference>
<dbReference type="InParanoid" id="Q8R526"/>
<dbReference type="TreeFam" id="TF316484"/>
<dbReference type="ChiTaRS" id="Pkd1l1">
    <property type="organism name" value="mouse"/>
</dbReference>
<dbReference type="PRO" id="PR:Q8R526"/>
<dbReference type="Proteomes" id="UP000000589">
    <property type="component" value="Unplaced"/>
</dbReference>
<dbReference type="RNAct" id="Q8R526">
    <property type="molecule type" value="protein"/>
</dbReference>
<dbReference type="GO" id="GO:0034704">
    <property type="term" value="C:calcium channel complex"/>
    <property type="evidence" value="ECO:0000250"/>
    <property type="project" value="UniProtKB"/>
</dbReference>
<dbReference type="GO" id="GO:0060170">
    <property type="term" value="C:ciliary membrane"/>
    <property type="evidence" value="ECO:0000250"/>
    <property type="project" value="UniProtKB"/>
</dbReference>
<dbReference type="GO" id="GO:0005929">
    <property type="term" value="C:cilium"/>
    <property type="evidence" value="ECO:0000315"/>
    <property type="project" value="BHF-UCL"/>
</dbReference>
<dbReference type="GO" id="GO:0097730">
    <property type="term" value="C:non-motile cilium"/>
    <property type="evidence" value="ECO:0000250"/>
    <property type="project" value="UniProtKB"/>
</dbReference>
<dbReference type="GO" id="GO:0005262">
    <property type="term" value="F:calcium channel activity"/>
    <property type="evidence" value="ECO:0007669"/>
    <property type="project" value="UniProtKB-KW"/>
</dbReference>
<dbReference type="GO" id="GO:0003127">
    <property type="term" value="P:detection of nodal flow"/>
    <property type="evidence" value="ECO:0000315"/>
    <property type="project" value="BHF-UCL"/>
</dbReference>
<dbReference type="GO" id="GO:0007368">
    <property type="term" value="P:determination of left/right symmetry"/>
    <property type="evidence" value="ECO:0000315"/>
    <property type="project" value="MGI"/>
</dbReference>
<dbReference type="GO" id="GO:0007507">
    <property type="term" value="P:heart development"/>
    <property type="evidence" value="ECO:0000315"/>
    <property type="project" value="MGI"/>
</dbReference>
<dbReference type="GO" id="GO:0070986">
    <property type="term" value="P:left/right axis specification"/>
    <property type="evidence" value="ECO:0000315"/>
    <property type="project" value="BHF-UCL"/>
</dbReference>
<dbReference type="GO" id="GO:0060972">
    <property type="term" value="P:left/right pattern formation"/>
    <property type="evidence" value="ECO:0000315"/>
    <property type="project" value="MGI"/>
</dbReference>
<dbReference type="CDD" id="cd00146">
    <property type="entry name" value="PKD"/>
    <property type="match status" value="1"/>
</dbReference>
<dbReference type="FunFam" id="2.60.60.20:FF:000017">
    <property type="entry name" value="Polycystin 1 like 1, transient receptor potential channel interacting"/>
    <property type="match status" value="1"/>
</dbReference>
<dbReference type="FunFam" id="2.60.40.10:FF:000825">
    <property type="entry name" value="Polycystin 1, transient receptor potential channel interacting"/>
    <property type="match status" value="1"/>
</dbReference>
<dbReference type="Gene3D" id="2.60.40.10">
    <property type="entry name" value="Immunoglobulins"/>
    <property type="match status" value="2"/>
</dbReference>
<dbReference type="Gene3D" id="2.60.60.20">
    <property type="entry name" value="PLAT/LH2 domain"/>
    <property type="match status" value="1"/>
</dbReference>
<dbReference type="InterPro" id="IPR057244">
    <property type="entry name" value="GAIN_B"/>
</dbReference>
<dbReference type="InterPro" id="IPR013783">
    <property type="entry name" value="Ig-like_fold"/>
</dbReference>
<dbReference type="InterPro" id="IPR022409">
    <property type="entry name" value="PKD/Chitinase_dom"/>
</dbReference>
<dbReference type="InterPro" id="IPR002859">
    <property type="entry name" value="PKD/REJ-like"/>
</dbReference>
<dbReference type="InterPro" id="IPR000601">
    <property type="entry name" value="PKD_dom"/>
</dbReference>
<dbReference type="InterPro" id="IPR035986">
    <property type="entry name" value="PKD_dom_sf"/>
</dbReference>
<dbReference type="InterPro" id="IPR001024">
    <property type="entry name" value="PLAT/LH2_dom"/>
</dbReference>
<dbReference type="InterPro" id="IPR036392">
    <property type="entry name" value="PLAT/LH2_dom_sf"/>
</dbReference>
<dbReference type="InterPro" id="IPR046791">
    <property type="entry name" value="Polycystin_dom"/>
</dbReference>
<dbReference type="InterPro" id="IPR014010">
    <property type="entry name" value="REJ_dom"/>
</dbReference>
<dbReference type="PANTHER" id="PTHR46730:SF4">
    <property type="entry name" value="POLYCYSTIC KIDNEY DISEASE PROTEIN 1-LIKE 1"/>
    <property type="match status" value="1"/>
</dbReference>
<dbReference type="PANTHER" id="PTHR46730">
    <property type="entry name" value="POLYCYSTIN-1"/>
    <property type="match status" value="1"/>
</dbReference>
<dbReference type="Pfam" id="PF00801">
    <property type="entry name" value="PKD"/>
    <property type="match status" value="1"/>
</dbReference>
<dbReference type="Pfam" id="PF01477">
    <property type="entry name" value="PLAT"/>
    <property type="match status" value="1"/>
</dbReference>
<dbReference type="Pfam" id="PF20519">
    <property type="entry name" value="Polycystin_dom"/>
    <property type="match status" value="1"/>
</dbReference>
<dbReference type="Pfam" id="PF02010">
    <property type="entry name" value="REJ"/>
    <property type="match status" value="2"/>
</dbReference>
<dbReference type="SMART" id="SM00308">
    <property type="entry name" value="LH2"/>
    <property type="match status" value="1"/>
</dbReference>
<dbReference type="SMART" id="SM00089">
    <property type="entry name" value="PKD"/>
    <property type="match status" value="2"/>
</dbReference>
<dbReference type="SUPFAM" id="SSF49723">
    <property type="entry name" value="Lipase/lipooxygenase domain (PLAT/LH2 domain)"/>
    <property type="match status" value="1"/>
</dbReference>
<dbReference type="SUPFAM" id="SSF49299">
    <property type="entry name" value="PKD domain"/>
    <property type="match status" value="2"/>
</dbReference>
<dbReference type="PROSITE" id="PS50221">
    <property type="entry name" value="GAIN_B"/>
    <property type="match status" value="1"/>
</dbReference>
<dbReference type="PROSITE" id="PS50093">
    <property type="entry name" value="PKD"/>
    <property type="match status" value="1"/>
</dbReference>
<dbReference type="PROSITE" id="PS50095">
    <property type="entry name" value="PLAT"/>
    <property type="match status" value="1"/>
</dbReference>
<dbReference type="PROSITE" id="PS51111">
    <property type="entry name" value="REJ"/>
    <property type="match status" value="1"/>
</dbReference>